<keyword id="KW-0963">Cytoplasm</keyword>
<keyword id="KW-0396">Initiation factor</keyword>
<keyword id="KW-1017">Isopeptide bond</keyword>
<keyword id="KW-0488">Methylation</keyword>
<keyword id="KW-0597">Phosphoprotein</keyword>
<keyword id="KW-0648">Protein biosynthesis</keyword>
<keyword id="KW-1185">Reference proteome</keyword>
<keyword id="KW-0832">Ubl conjugation</keyword>
<organism>
    <name type="scientific">Mus musculus</name>
    <name type="common">Mouse</name>
    <dbReference type="NCBI Taxonomy" id="10090"/>
    <lineage>
        <taxon>Eukaryota</taxon>
        <taxon>Metazoa</taxon>
        <taxon>Chordata</taxon>
        <taxon>Craniata</taxon>
        <taxon>Vertebrata</taxon>
        <taxon>Euteleostomi</taxon>
        <taxon>Mammalia</taxon>
        <taxon>Eutheria</taxon>
        <taxon>Euarchontoglires</taxon>
        <taxon>Glires</taxon>
        <taxon>Rodentia</taxon>
        <taxon>Myomorpha</taxon>
        <taxon>Muroidea</taxon>
        <taxon>Muridae</taxon>
        <taxon>Murinae</taxon>
        <taxon>Mus</taxon>
        <taxon>Mus</taxon>
    </lineage>
</organism>
<feature type="chain" id="PRO_0000239429" description="Translation initiation factor eIF2B subunit epsilon">
    <location>
        <begin position="1"/>
        <end position="717"/>
    </location>
</feature>
<feature type="domain" description="W2" evidence="5">
    <location>
        <begin position="539"/>
        <end position="716"/>
    </location>
</feature>
<feature type="region of interest" description="Disordered" evidence="6">
    <location>
        <begin position="1"/>
        <end position="37"/>
    </location>
</feature>
<feature type="region of interest" description="Disordered" evidence="6">
    <location>
        <begin position="442"/>
        <end position="479"/>
    </location>
</feature>
<feature type="region of interest" description="Disordered" evidence="6">
    <location>
        <begin position="517"/>
        <end position="538"/>
    </location>
</feature>
<feature type="compositionally biased region" description="Low complexity" evidence="6">
    <location>
        <begin position="1"/>
        <end position="14"/>
    </location>
</feature>
<feature type="compositionally biased region" description="Gly residues" evidence="6">
    <location>
        <begin position="18"/>
        <end position="29"/>
    </location>
</feature>
<feature type="compositionally biased region" description="Acidic residues" evidence="6">
    <location>
        <begin position="452"/>
        <end position="467"/>
    </location>
</feature>
<feature type="compositionally biased region" description="Acidic residues" evidence="6">
    <location>
        <begin position="519"/>
        <end position="533"/>
    </location>
</feature>
<feature type="modified residue" description="Omega-N-methylarginine" evidence="12">
    <location>
        <position position="18"/>
    </location>
</feature>
<feature type="modified residue" description="Phosphoserine" evidence="4">
    <location>
        <position position="23"/>
    </location>
</feature>
<feature type="modified residue" description="Phosphoserine" evidence="4">
    <location>
        <position position="126"/>
    </location>
</feature>
<feature type="modified residue" description="Phosphothreonine" evidence="4">
    <location>
        <position position="318"/>
    </location>
</feature>
<feature type="modified residue" description="Phosphoserine" evidence="3">
    <location>
        <position position="446"/>
    </location>
</feature>
<feature type="modified residue" description="Phosphoserine" evidence="3">
    <location>
        <position position="462"/>
    </location>
</feature>
<feature type="modified residue" description="Phosphoserine" evidence="3">
    <location>
        <position position="465"/>
    </location>
</feature>
<feature type="modified residue" description="Phosphoserine" evidence="4">
    <location>
        <position position="528"/>
    </location>
</feature>
<feature type="modified residue" description="Phosphoserine" evidence="4">
    <location>
        <position position="536"/>
    </location>
</feature>
<feature type="modified residue" description="Phosphoserine; by DYRK2" evidence="8 9 10 11">
    <location>
        <position position="540"/>
    </location>
</feature>
<feature type="modified residue" description="Phosphoserine" evidence="3">
    <location>
        <position position="713"/>
    </location>
</feature>
<feature type="cross-link" description="Glycyl lysine isopeptide (Lys-Gly) (interchain with G-Cter in ubiquitin)" evidence="4">
    <location>
        <position position="57"/>
    </location>
</feature>
<feature type="cross-link" description="Glycyl lysine isopeptide (Lys-Gly) (interchain with G-Cter in ubiquitin)" evidence="4">
    <location>
        <position position="99"/>
    </location>
</feature>
<feature type="cross-link" description="Glycyl lysine isopeptide (Lys-Gly) (interchain with G-Cter in ubiquitin)" evidence="4">
    <location>
        <position position="137"/>
    </location>
</feature>
<feature type="cross-link" description="Glycyl lysine isopeptide (Lys-Gly) (interchain with G-Cter in ubiquitin)" evidence="4">
    <location>
        <position position="213"/>
    </location>
</feature>
<feature type="cross-link" description="Glycyl lysine isopeptide (Lys-Gly) (interchain with G-Cter in ubiquitin)" evidence="4">
    <location>
        <position position="501"/>
    </location>
</feature>
<feature type="sequence conflict" description="In Ref. 1; BAE36132." evidence="7" ref="1">
    <original>P</original>
    <variation>H</variation>
    <location>
        <position position="54"/>
    </location>
</feature>
<gene>
    <name type="primary">Eif2b5</name>
</gene>
<name>EI2BE_MOUSE</name>
<accession>Q8CHW4</accession>
<accession>Q3TU39</accession>
<dbReference type="EMBL" id="AK160985">
    <property type="protein sequence ID" value="BAE36132.1"/>
    <property type="molecule type" value="mRNA"/>
</dbReference>
<dbReference type="EMBL" id="BC038620">
    <property type="protein sequence ID" value="AAH38620.1"/>
    <property type="molecule type" value="mRNA"/>
</dbReference>
<dbReference type="EMBL" id="BC085255">
    <property type="protein sequence ID" value="AAH85255.1"/>
    <property type="molecule type" value="mRNA"/>
</dbReference>
<dbReference type="CCDS" id="CCDS28047.1"/>
<dbReference type="RefSeq" id="NP_758469.1">
    <property type="nucleotide sequence ID" value="NM_172265.3"/>
</dbReference>
<dbReference type="SMR" id="Q8CHW4"/>
<dbReference type="BioGRID" id="230231">
    <property type="interactions" value="14"/>
</dbReference>
<dbReference type="FunCoup" id="Q8CHW4">
    <property type="interactions" value="5298"/>
</dbReference>
<dbReference type="STRING" id="10090.ENSMUSP00000003320"/>
<dbReference type="GlyGen" id="Q8CHW4">
    <property type="glycosylation" value="2 sites, 1 N-linked glycan (1 site), 1 O-linked glycan (1 site)"/>
</dbReference>
<dbReference type="iPTMnet" id="Q8CHW4"/>
<dbReference type="PhosphoSitePlus" id="Q8CHW4"/>
<dbReference type="SwissPalm" id="Q8CHW4"/>
<dbReference type="jPOST" id="Q8CHW4"/>
<dbReference type="PaxDb" id="10090-ENSMUSP00000003320"/>
<dbReference type="PeptideAtlas" id="Q8CHW4"/>
<dbReference type="ProteomicsDB" id="277578"/>
<dbReference type="Pumba" id="Q8CHW4"/>
<dbReference type="Antibodypedia" id="4211">
    <property type="antibodies" value="168 antibodies from 27 providers"/>
</dbReference>
<dbReference type="DNASU" id="224045"/>
<dbReference type="Ensembl" id="ENSMUST00000003320.14">
    <property type="protein sequence ID" value="ENSMUSP00000003320.7"/>
    <property type="gene ID" value="ENSMUSG00000003235.14"/>
</dbReference>
<dbReference type="GeneID" id="224045"/>
<dbReference type="KEGG" id="mmu:224045"/>
<dbReference type="UCSC" id="uc007ypu.2">
    <property type="organism name" value="mouse"/>
</dbReference>
<dbReference type="AGR" id="MGI:2446176"/>
<dbReference type="CTD" id="8893"/>
<dbReference type="MGI" id="MGI:2446176">
    <property type="gene designation" value="Eif2b5"/>
</dbReference>
<dbReference type="VEuPathDB" id="HostDB:ENSMUSG00000003235"/>
<dbReference type="eggNOG" id="KOG1461">
    <property type="taxonomic scope" value="Eukaryota"/>
</dbReference>
<dbReference type="GeneTree" id="ENSGT00510000047568"/>
<dbReference type="HOGENOM" id="CLU_012507_2_0_1"/>
<dbReference type="InParanoid" id="Q8CHW4"/>
<dbReference type="OMA" id="LAQSCKI"/>
<dbReference type="OrthoDB" id="424572at2759"/>
<dbReference type="PhylomeDB" id="Q8CHW4"/>
<dbReference type="TreeFam" id="TF101509"/>
<dbReference type="Reactome" id="R-MMU-72731">
    <property type="pathway name" value="Recycling of eIF2:GDP"/>
</dbReference>
<dbReference type="BioGRID-ORCS" id="224045">
    <property type="hits" value="27 hits in 80 CRISPR screens"/>
</dbReference>
<dbReference type="ChiTaRS" id="Eif2b5">
    <property type="organism name" value="mouse"/>
</dbReference>
<dbReference type="PRO" id="PR:Q8CHW4"/>
<dbReference type="Proteomes" id="UP000000589">
    <property type="component" value="Chromosome 16"/>
</dbReference>
<dbReference type="RNAct" id="Q8CHW4">
    <property type="molecule type" value="protein"/>
</dbReference>
<dbReference type="Bgee" id="ENSMUSG00000003235">
    <property type="expression patterns" value="Expressed in spermatocyte and 271 other cell types or tissues"/>
</dbReference>
<dbReference type="ExpressionAtlas" id="Q8CHW4">
    <property type="expression patterns" value="baseline and differential"/>
</dbReference>
<dbReference type="GO" id="GO:0005737">
    <property type="term" value="C:cytoplasm"/>
    <property type="evidence" value="ECO:0000314"/>
    <property type="project" value="MGI"/>
</dbReference>
<dbReference type="GO" id="GO:0005829">
    <property type="term" value="C:cytosol"/>
    <property type="evidence" value="ECO:0007669"/>
    <property type="project" value="UniProtKB-SubCell"/>
</dbReference>
<dbReference type="GO" id="GO:0005851">
    <property type="term" value="C:eukaryotic translation initiation factor 2B complex"/>
    <property type="evidence" value="ECO:0000250"/>
    <property type="project" value="UniProtKB"/>
</dbReference>
<dbReference type="GO" id="GO:0005634">
    <property type="term" value="C:nucleus"/>
    <property type="evidence" value="ECO:0000314"/>
    <property type="project" value="MGI"/>
</dbReference>
<dbReference type="GO" id="GO:0005085">
    <property type="term" value="F:guanyl-nucleotide exchange factor activity"/>
    <property type="evidence" value="ECO:0000250"/>
    <property type="project" value="UniProtKB"/>
</dbReference>
<dbReference type="GO" id="GO:0003743">
    <property type="term" value="F:translation initiation factor activity"/>
    <property type="evidence" value="ECO:0007669"/>
    <property type="project" value="UniProtKB-KW"/>
</dbReference>
<dbReference type="GO" id="GO:0031369">
    <property type="term" value="F:translation initiation factor binding"/>
    <property type="evidence" value="ECO:0007669"/>
    <property type="project" value="Ensembl"/>
</dbReference>
<dbReference type="GO" id="GO:0014002">
    <property type="term" value="P:astrocyte development"/>
    <property type="evidence" value="ECO:0000250"/>
    <property type="project" value="UniProtKB"/>
</dbReference>
<dbReference type="GO" id="GO:0048708">
    <property type="term" value="P:astrocyte differentiation"/>
    <property type="evidence" value="ECO:0000250"/>
    <property type="project" value="UniProtKB"/>
</dbReference>
<dbReference type="GO" id="GO:0002183">
    <property type="term" value="P:cytoplasmic translational initiation"/>
    <property type="evidence" value="ECO:0000250"/>
    <property type="project" value="UniProtKB"/>
</dbReference>
<dbReference type="GO" id="GO:0021766">
    <property type="term" value="P:hippocampus development"/>
    <property type="evidence" value="ECO:0007669"/>
    <property type="project" value="Ensembl"/>
</dbReference>
<dbReference type="GO" id="GO:0042552">
    <property type="term" value="P:myelination"/>
    <property type="evidence" value="ECO:0000250"/>
    <property type="project" value="UniProtKB"/>
</dbReference>
<dbReference type="GO" id="GO:0014003">
    <property type="term" value="P:oligodendrocyte development"/>
    <property type="evidence" value="ECO:0000250"/>
    <property type="project" value="UniProtKB"/>
</dbReference>
<dbReference type="GO" id="GO:0001541">
    <property type="term" value="P:ovarian follicle development"/>
    <property type="evidence" value="ECO:0000250"/>
    <property type="project" value="UniProtKB"/>
</dbReference>
<dbReference type="GO" id="GO:0043065">
    <property type="term" value="P:positive regulation of apoptotic process"/>
    <property type="evidence" value="ECO:0007669"/>
    <property type="project" value="Ensembl"/>
</dbReference>
<dbReference type="GO" id="GO:0045948">
    <property type="term" value="P:positive regulation of translational initiation"/>
    <property type="evidence" value="ECO:0000250"/>
    <property type="project" value="UniProtKB"/>
</dbReference>
<dbReference type="GO" id="GO:0034976">
    <property type="term" value="P:response to endoplasmic reticulum stress"/>
    <property type="evidence" value="ECO:0000250"/>
    <property type="project" value="UniProtKB"/>
</dbReference>
<dbReference type="GO" id="GO:0009749">
    <property type="term" value="P:response to glucose"/>
    <property type="evidence" value="ECO:0000250"/>
    <property type="project" value="UniProtKB"/>
</dbReference>
<dbReference type="GO" id="GO:0009408">
    <property type="term" value="P:response to heat"/>
    <property type="evidence" value="ECO:0000250"/>
    <property type="project" value="UniProtKB"/>
</dbReference>
<dbReference type="GO" id="GO:0043434">
    <property type="term" value="P:response to peptide hormone"/>
    <property type="evidence" value="ECO:0000250"/>
    <property type="project" value="UniProtKB"/>
</dbReference>
<dbReference type="GO" id="GO:0050852">
    <property type="term" value="P:T cell receptor signaling pathway"/>
    <property type="evidence" value="ECO:0000250"/>
    <property type="project" value="UniProtKB"/>
</dbReference>
<dbReference type="GO" id="GO:0006413">
    <property type="term" value="P:translational initiation"/>
    <property type="evidence" value="ECO:0000250"/>
    <property type="project" value="UniProtKB"/>
</dbReference>
<dbReference type="CDD" id="cd04197">
    <property type="entry name" value="eIF-2B_epsilon_N"/>
    <property type="match status" value="1"/>
</dbReference>
<dbReference type="CDD" id="cd05787">
    <property type="entry name" value="LbH_eIF2B_epsilon"/>
    <property type="match status" value="1"/>
</dbReference>
<dbReference type="CDD" id="cd11558">
    <property type="entry name" value="W2_eIF2B_epsilon"/>
    <property type="match status" value="1"/>
</dbReference>
<dbReference type="FunFam" id="1.25.40.180:FF:000022">
    <property type="entry name" value="Translation initiation factor eIF-2B epsilon subunit"/>
    <property type="match status" value="1"/>
</dbReference>
<dbReference type="FunFam" id="2.160.10.10:FF:000027">
    <property type="entry name" value="Translation initiation factor eIF-2B subunit epsilon"/>
    <property type="match status" value="1"/>
</dbReference>
<dbReference type="FunFam" id="2.160.10.10:FF:000052">
    <property type="entry name" value="Translation initiation factor eIF-2B subunit epsilon"/>
    <property type="match status" value="1"/>
</dbReference>
<dbReference type="FunFam" id="3.90.550.10:FF:000100">
    <property type="entry name" value="translation initiation factor eIF-2B subunit epsilon"/>
    <property type="match status" value="1"/>
</dbReference>
<dbReference type="Gene3D" id="1.25.40.180">
    <property type="match status" value="1"/>
</dbReference>
<dbReference type="Gene3D" id="2.160.10.10">
    <property type="entry name" value="Hexapeptide repeat proteins"/>
    <property type="match status" value="2"/>
</dbReference>
<dbReference type="Gene3D" id="3.90.550.10">
    <property type="entry name" value="Spore Coat Polysaccharide Biosynthesis Protein SpsA, Chain A"/>
    <property type="match status" value="1"/>
</dbReference>
<dbReference type="InterPro" id="IPR016024">
    <property type="entry name" value="ARM-type_fold"/>
</dbReference>
<dbReference type="InterPro" id="IPR035543">
    <property type="entry name" value="eIF-2B_epsilon_N"/>
</dbReference>
<dbReference type="InterPro" id="IPR051956">
    <property type="entry name" value="eIF2B_epsilon"/>
</dbReference>
<dbReference type="InterPro" id="IPR029044">
    <property type="entry name" value="Nucleotide-diphossugar_trans"/>
</dbReference>
<dbReference type="InterPro" id="IPR011004">
    <property type="entry name" value="Trimer_LpxA-like_sf"/>
</dbReference>
<dbReference type="InterPro" id="IPR003307">
    <property type="entry name" value="W2_domain"/>
</dbReference>
<dbReference type="InterPro" id="IPR044123">
    <property type="entry name" value="W2_eIF2B_epsilon"/>
</dbReference>
<dbReference type="PANTHER" id="PTHR45887">
    <property type="entry name" value="TRANSLATION INITIATION FACTOR EIF-2B SUBUNIT EPSILON"/>
    <property type="match status" value="1"/>
</dbReference>
<dbReference type="PANTHER" id="PTHR45887:SF1">
    <property type="entry name" value="TRANSLATION INITIATION FACTOR EIF-2B SUBUNIT EPSILON"/>
    <property type="match status" value="1"/>
</dbReference>
<dbReference type="Pfam" id="PF25084">
    <property type="entry name" value="LbH_EIF2B"/>
    <property type="match status" value="1"/>
</dbReference>
<dbReference type="Pfam" id="PF02020">
    <property type="entry name" value="W2"/>
    <property type="match status" value="1"/>
</dbReference>
<dbReference type="SMART" id="SM00515">
    <property type="entry name" value="eIF5C"/>
    <property type="match status" value="1"/>
</dbReference>
<dbReference type="SUPFAM" id="SSF48371">
    <property type="entry name" value="ARM repeat"/>
    <property type="match status" value="1"/>
</dbReference>
<dbReference type="SUPFAM" id="SSF53448">
    <property type="entry name" value="Nucleotide-diphospho-sugar transferases"/>
    <property type="match status" value="1"/>
</dbReference>
<dbReference type="SUPFAM" id="SSF51161">
    <property type="entry name" value="Trimeric LpxA-like enzymes"/>
    <property type="match status" value="1"/>
</dbReference>
<dbReference type="PROSITE" id="PS51363">
    <property type="entry name" value="W2"/>
    <property type="match status" value="1"/>
</dbReference>
<comment type="function">
    <text evidence="3">Acts as a component of the translation initiation factor 2B (eIF2B) complex, which catalyzes the exchange of GDP for GTP on eukaryotic initiation factor 2 (eIF2) gamma subunit. Its guanine nucleotide exchange factor activity is repressed when bound to eIF2 complex phosphorylated on the alpha subunit, thereby limiting the amount of methionyl-initiator methionine tRNA available to the ribosome and consequently global translation is repressed.</text>
</comment>
<comment type="activity regulation">
    <text evidence="3">Activated by the chemical integrated stress response (ISR) inhibitor ISRIB which stimulates guanine nucleotide exchange factor activity for both phosphorylated and unphosphorylated eIF2.</text>
</comment>
<comment type="subunit">
    <text evidence="3">Component of the translation initiation factor 2B (eIF2B) complex which is a heterodecamer of two sets of five different subunits: alpha, beta, gamma, delta and epsilon. Subunits alpha, beta and delta comprise a regulatory subcomplex and subunits epsilon and gamma comprise a catalytic subcomplex. Within the complex, the hexameric regulatory complex resides at the center, with the two heterodimeric catalytic subcomplexes bound on opposite sides.</text>
</comment>
<comment type="subcellular location">
    <subcellularLocation>
        <location evidence="2">Cytoplasm</location>
        <location evidence="2">Cytosol</location>
    </subcellularLocation>
</comment>
<comment type="PTM">
    <text evidence="1">Phosphorylated at Ser-540 by DYRK2; this is required for subsequent phosphorylation by GSK3B. Phosphorylated on serine and threonine residues by GSK3B; phosphorylation inhibits its function (By similarity).</text>
</comment>
<comment type="PTM">
    <text evidence="1">Polyubiquitinated, probably by NEDD4.</text>
</comment>
<comment type="similarity">
    <text evidence="7">Belongs to the eIF-2B gamma/epsilon subunits family.</text>
</comment>
<protein>
    <recommendedName>
        <fullName>Translation initiation factor eIF2B subunit epsilon</fullName>
    </recommendedName>
    <alternativeName>
        <fullName>eIF2B GDP-GTP exchange factor subunit epsilon</fullName>
    </alternativeName>
</protein>
<proteinExistence type="evidence at protein level"/>
<evidence type="ECO:0000250" key="1"/>
<evidence type="ECO:0000250" key="2">
    <source>
        <dbReference type="UniProtKB" id="P56287"/>
    </source>
</evidence>
<evidence type="ECO:0000250" key="3">
    <source>
        <dbReference type="UniProtKB" id="Q13144"/>
    </source>
</evidence>
<evidence type="ECO:0000250" key="4">
    <source>
        <dbReference type="UniProtKB" id="Q64350"/>
    </source>
</evidence>
<evidence type="ECO:0000255" key="5">
    <source>
        <dbReference type="PROSITE-ProRule" id="PRU00695"/>
    </source>
</evidence>
<evidence type="ECO:0000256" key="6">
    <source>
        <dbReference type="SAM" id="MobiDB-lite"/>
    </source>
</evidence>
<evidence type="ECO:0000305" key="7"/>
<evidence type="ECO:0007744" key="8">
    <source>
    </source>
</evidence>
<evidence type="ECO:0007744" key="9">
    <source>
    </source>
</evidence>
<evidence type="ECO:0007744" key="10">
    <source>
    </source>
</evidence>
<evidence type="ECO:0007744" key="11">
    <source>
    </source>
</evidence>
<evidence type="ECO:0007744" key="12">
    <source>
    </source>
</evidence>
<sequence length="717" mass="80086">MAATAAVPGAAAGRASKRGGGGSGGGGTQGAEEEPPPPLQAVLVADSFNRRFFPISKDQPRVLLPLANVALIDYTLEFLTATGVQETFVFCCWKAAQIKEHLQKSKWCHPTSPNVVRIITSELYRSLGDVLRDVDAKALVRSDFLLIYGDVISNINICRALEEHRLRRKLEKNVSVMTMVFKESSPSHPTRCHEDNVVMAVDSATNRVLHFQKTQGLRRFSFPLSLFQGSGDGVEIRYDLLDCHISICSPQVAQLFTDNFDYQTRDDFVRGILMNEEVLGNQIHLHVTTREYGARVSNLHMYSAVCADVIRRWVYPLTPEVNFTDSTTQSYTHSRHNIYRGPEVSLGHGSVLEENVLLGAGTVIGSNCSITNSVIGPNCHIGDNVVLDQAYLWQGVRVAAGAQIHQSLLCDRAEVKERVKLKPYCVLTSQVVVGPDITLPEGSVISLHPPDAEEDEDDGQFSDDSGADQEKEKVKLKGYNPAEVGLEGQGYLWKAEGVNSKEDEELRQSLWGLMIKTEEESETESEGSVDPEELDSRAGSPQLDDIRVFQNEVLGTLQRGREENISCENLVLEINSLKHAYNISLKEVMQVLTLVVLEFPLQQVDGLLDPNRYCALLLPLLKAWSPVLRNYIKRAADHLEALAAIEDFFLEHETLVTSMAKVLMAFYQLEILAEETILSWFSQRDTTDEGQQLRKNQQLQRFIQWLREAEEESSEDD</sequence>
<reference key="1">
    <citation type="journal article" date="2005" name="Science">
        <title>The transcriptional landscape of the mammalian genome.</title>
        <authorList>
            <person name="Carninci P."/>
            <person name="Kasukawa T."/>
            <person name="Katayama S."/>
            <person name="Gough J."/>
            <person name="Frith M.C."/>
            <person name="Maeda N."/>
            <person name="Oyama R."/>
            <person name="Ravasi T."/>
            <person name="Lenhard B."/>
            <person name="Wells C."/>
            <person name="Kodzius R."/>
            <person name="Shimokawa K."/>
            <person name="Bajic V.B."/>
            <person name="Brenner S.E."/>
            <person name="Batalov S."/>
            <person name="Forrest A.R."/>
            <person name="Zavolan M."/>
            <person name="Davis M.J."/>
            <person name="Wilming L.G."/>
            <person name="Aidinis V."/>
            <person name="Allen J.E."/>
            <person name="Ambesi-Impiombato A."/>
            <person name="Apweiler R."/>
            <person name="Aturaliya R.N."/>
            <person name="Bailey T.L."/>
            <person name="Bansal M."/>
            <person name="Baxter L."/>
            <person name="Beisel K.W."/>
            <person name="Bersano T."/>
            <person name="Bono H."/>
            <person name="Chalk A.M."/>
            <person name="Chiu K.P."/>
            <person name="Choudhary V."/>
            <person name="Christoffels A."/>
            <person name="Clutterbuck D.R."/>
            <person name="Crowe M.L."/>
            <person name="Dalla E."/>
            <person name="Dalrymple B.P."/>
            <person name="de Bono B."/>
            <person name="Della Gatta G."/>
            <person name="di Bernardo D."/>
            <person name="Down T."/>
            <person name="Engstrom P."/>
            <person name="Fagiolini M."/>
            <person name="Faulkner G."/>
            <person name="Fletcher C.F."/>
            <person name="Fukushima T."/>
            <person name="Furuno M."/>
            <person name="Futaki S."/>
            <person name="Gariboldi M."/>
            <person name="Georgii-Hemming P."/>
            <person name="Gingeras T.R."/>
            <person name="Gojobori T."/>
            <person name="Green R.E."/>
            <person name="Gustincich S."/>
            <person name="Harbers M."/>
            <person name="Hayashi Y."/>
            <person name="Hensch T.K."/>
            <person name="Hirokawa N."/>
            <person name="Hill D."/>
            <person name="Huminiecki L."/>
            <person name="Iacono M."/>
            <person name="Ikeo K."/>
            <person name="Iwama A."/>
            <person name="Ishikawa T."/>
            <person name="Jakt M."/>
            <person name="Kanapin A."/>
            <person name="Katoh M."/>
            <person name="Kawasawa Y."/>
            <person name="Kelso J."/>
            <person name="Kitamura H."/>
            <person name="Kitano H."/>
            <person name="Kollias G."/>
            <person name="Krishnan S.P."/>
            <person name="Kruger A."/>
            <person name="Kummerfeld S.K."/>
            <person name="Kurochkin I.V."/>
            <person name="Lareau L.F."/>
            <person name="Lazarevic D."/>
            <person name="Lipovich L."/>
            <person name="Liu J."/>
            <person name="Liuni S."/>
            <person name="McWilliam S."/>
            <person name="Madan Babu M."/>
            <person name="Madera M."/>
            <person name="Marchionni L."/>
            <person name="Matsuda H."/>
            <person name="Matsuzawa S."/>
            <person name="Miki H."/>
            <person name="Mignone F."/>
            <person name="Miyake S."/>
            <person name="Morris K."/>
            <person name="Mottagui-Tabar S."/>
            <person name="Mulder N."/>
            <person name="Nakano N."/>
            <person name="Nakauchi H."/>
            <person name="Ng P."/>
            <person name="Nilsson R."/>
            <person name="Nishiguchi S."/>
            <person name="Nishikawa S."/>
            <person name="Nori F."/>
            <person name="Ohara O."/>
            <person name="Okazaki Y."/>
            <person name="Orlando V."/>
            <person name="Pang K.C."/>
            <person name="Pavan W.J."/>
            <person name="Pavesi G."/>
            <person name="Pesole G."/>
            <person name="Petrovsky N."/>
            <person name="Piazza S."/>
            <person name="Reed J."/>
            <person name="Reid J.F."/>
            <person name="Ring B.Z."/>
            <person name="Ringwald M."/>
            <person name="Rost B."/>
            <person name="Ruan Y."/>
            <person name="Salzberg S.L."/>
            <person name="Sandelin A."/>
            <person name="Schneider C."/>
            <person name="Schoenbach C."/>
            <person name="Sekiguchi K."/>
            <person name="Semple C.A."/>
            <person name="Seno S."/>
            <person name="Sessa L."/>
            <person name="Sheng Y."/>
            <person name="Shibata Y."/>
            <person name="Shimada H."/>
            <person name="Shimada K."/>
            <person name="Silva D."/>
            <person name="Sinclair B."/>
            <person name="Sperling S."/>
            <person name="Stupka E."/>
            <person name="Sugiura K."/>
            <person name="Sultana R."/>
            <person name="Takenaka Y."/>
            <person name="Taki K."/>
            <person name="Tammoja K."/>
            <person name="Tan S.L."/>
            <person name="Tang S."/>
            <person name="Taylor M.S."/>
            <person name="Tegner J."/>
            <person name="Teichmann S.A."/>
            <person name="Ueda H.R."/>
            <person name="van Nimwegen E."/>
            <person name="Verardo R."/>
            <person name="Wei C.L."/>
            <person name="Yagi K."/>
            <person name="Yamanishi H."/>
            <person name="Zabarovsky E."/>
            <person name="Zhu S."/>
            <person name="Zimmer A."/>
            <person name="Hide W."/>
            <person name="Bult C."/>
            <person name="Grimmond S.M."/>
            <person name="Teasdale R.D."/>
            <person name="Liu E.T."/>
            <person name="Brusic V."/>
            <person name="Quackenbush J."/>
            <person name="Wahlestedt C."/>
            <person name="Mattick J.S."/>
            <person name="Hume D.A."/>
            <person name="Kai C."/>
            <person name="Sasaki D."/>
            <person name="Tomaru Y."/>
            <person name="Fukuda S."/>
            <person name="Kanamori-Katayama M."/>
            <person name="Suzuki M."/>
            <person name="Aoki J."/>
            <person name="Arakawa T."/>
            <person name="Iida J."/>
            <person name="Imamura K."/>
            <person name="Itoh M."/>
            <person name="Kato T."/>
            <person name="Kawaji H."/>
            <person name="Kawagashira N."/>
            <person name="Kawashima T."/>
            <person name="Kojima M."/>
            <person name="Kondo S."/>
            <person name="Konno H."/>
            <person name="Nakano K."/>
            <person name="Ninomiya N."/>
            <person name="Nishio T."/>
            <person name="Okada M."/>
            <person name="Plessy C."/>
            <person name="Shibata K."/>
            <person name="Shiraki T."/>
            <person name="Suzuki S."/>
            <person name="Tagami M."/>
            <person name="Waki K."/>
            <person name="Watahiki A."/>
            <person name="Okamura-Oho Y."/>
            <person name="Suzuki H."/>
            <person name="Kawai J."/>
            <person name="Hayashizaki Y."/>
        </authorList>
    </citation>
    <scope>NUCLEOTIDE SEQUENCE [LARGE SCALE MRNA]</scope>
    <source>
        <strain>C57BL/6J</strain>
        <tissue>Head</tissue>
    </source>
</reference>
<reference key="2">
    <citation type="journal article" date="2004" name="Genome Res.">
        <title>The status, quality, and expansion of the NIH full-length cDNA project: the Mammalian Gene Collection (MGC).</title>
        <authorList>
            <consortium name="The MGC Project Team"/>
        </authorList>
    </citation>
    <scope>NUCLEOTIDE SEQUENCE [LARGE SCALE MRNA]</scope>
    <source>
        <strain>FVB/N</strain>
        <tissue>Liver</tissue>
        <tissue>Mammary tumor</tissue>
    </source>
</reference>
<reference key="3">
    <citation type="journal article" date="2007" name="Proc. Natl. Acad. Sci. U.S.A.">
        <title>Large-scale phosphorylation analysis of mouse liver.</title>
        <authorList>
            <person name="Villen J."/>
            <person name="Beausoleil S.A."/>
            <person name="Gerber S.A."/>
            <person name="Gygi S.P."/>
        </authorList>
    </citation>
    <scope>PHOSPHORYLATION [LARGE SCALE ANALYSIS] AT SER-540</scope>
    <scope>IDENTIFICATION BY MASS SPECTROMETRY [LARGE SCALE ANALYSIS]</scope>
    <source>
        <tissue>Liver</tissue>
    </source>
</reference>
<reference key="4">
    <citation type="journal article" date="2008" name="J. Proteome Res.">
        <title>Specific phosphopeptide enrichment with immobilized titanium ion affinity chromatography adsorbent for phosphoproteome analysis.</title>
        <authorList>
            <person name="Zhou H."/>
            <person name="Ye M."/>
            <person name="Dong J."/>
            <person name="Han G."/>
            <person name="Jiang X."/>
            <person name="Wu R."/>
            <person name="Zou H."/>
        </authorList>
    </citation>
    <scope>IDENTIFICATION BY MASS SPECTROMETRY [LARGE SCALE ANALYSIS]</scope>
    <source>
        <tissue>Liver</tissue>
    </source>
</reference>
<reference key="5">
    <citation type="journal article" date="2009" name="Immunity">
        <title>The phagosomal proteome in interferon-gamma-activated macrophages.</title>
        <authorList>
            <person name="Trost M."/>
            <person name="English L."/>
            <person name="Lemieux S."/>
            <person name="Courcelles M."/>
            <person name="Desjardins M."/>
            <person name="Thibault P."/>
        </authorList>
    </citation>
    <scope>PHOSPHORYLATION [LARGE SCALE ANALYSIS] AT SER-540</scope>
    <scope>IDENTIFICATION BY MASS SPECTROMETRY [LARGE SCALE ANALYSIS]</scope>
</reference>
<reference key="6">
    <citation type="journal article" date="2009" name="Mol. Cell. Proteomics">
        <title>Large scale localization of protein phosphorylation by use of electron capture dissociation mass spectrometry.</title>
        <authorList>
            <person name="Sweet S.M."/>
            <person name="Bailey C.M."/>
            <person name="Cunningham D.L."/>
            <person name="Heath J.K."/>
            <person name="Cooper H.J."/>
        </authorList>
    </citation>
    <scope>PHOSPHORYLATION [LARGE SCALE ANALYSIS] AT SER-540</scope>
    <scope>IDENTIFICATION BY MASS SPECTROMETRY [LARGE SCALE ANALYSIS]</scope>
    <source>
        <tissue>Embryonic fibroblast</tissue>
    </source>
</reference>
<reference key="7">
    <citation type="journal article" date="2010" name="Cell">
        <title>A tissue-specific atlas of mouse protein phosphorylation and expression.</title>
        <authorList>
            <person name="Huttlin E.L."/>
            <person name="Jedrychowski M.P."/>
            <person name="Elias J.E."/>
            <person name="Goswami T."/>
            <person name="Rad R."/>
            <person name="Beausoleil S.A."/>
            <person name="Villen J."/>
            <person name="Haas W."/>
            <person name="Sowa M.E."/>
            <person name="Gygi S.P."/>
        </authorList>
    </citation>
    <scope>PHOSPHORYLATION [LARGE SCALE ANALYSIS] AT SER-540</scope>
    <scope>IDENTIFICATION BY MASS SPECTROMETRY [LARGE SCALE ANALYSIS]</scope>
    <source>
        <tissue>Brain</tissue>
        <tissue>Brown adipose tissue</tissue>
        <tissue>Heart</tissue>
        <tissue>Kidney</tissue>
        <tissue>Liver</tissue>
        <tissue>Lung</tissue>
        <tissue>Pancreas</tissue>
        <tissue>Spleen</tissue>
        <tissue>Testis</tissue>
    </source>
</reference>
<reference key="8">
    <citation type="journal article" date="2014" name="Mol. Cell. Proteomics">
        <title>Immunoaffinity enrichment and mass spectrometry analysis of protein methylation.</title>
        <authorList>
            <person name="Guo A."/>
            <person name="Gu H."/>
            <person name="Zhou J."/>
            <person name="Mulhern D."/>
            <person name="Wang Y."/>
            <person name="Lee K.A."/>
            <person name="Yang V."/>
            <person name="Aguiar M."/>
            <person name="Kornhauser J."/>
            <person name="Jia X."/>
            <person name="Ren J."/>
            <person name="Beausoleil S.A."/>
            <person name="Silva J.C."/>
            <person name="Vemulapalli V."/>
            <person name="Bedford M.T."/>
            <person name="Comb M.J."/>
        </authorList>
    </citation>
    <scope>METHYLATION [LARGE SCALE ANALYSIS] AT ARG-18</scope>
    <scope>IDENTIFICATION BY MASS SPECTROMETRY [LARGE SCALE ANALYSIS]</scope>
    <source>
        <tissue>Brain</tissue>
        <tissue>Embryo</tissue>
    </source>
</reference>